<proteinExistence type="evidence at transcript level"/>
<reference key="1">
    <citation type="journal article" date="2000" name="Nature">
        <title>Sequence and analysis of chromosome 5 of the plant Arabidopsis thaliana.</title>
        <authorList>
            <person name="Tabata S."/>
            <person name="Kaneko T."/>
            <person name="Nakamura Y."/>
            <person name="Kotani H."/>
            <person name="Kato T."/>
            <person name="Asamizu E."/>
            <person name="Miyajima N."/>
            <person name="Sasamoto S."/>
            <person name="Kimura T."/>
            <person name="Hosouchi T."/>
            <person name="Kawashima K."/>
            <person name="Kohara M."/>
            <person name="Matsumoto M."/>
            <person name="Matsuno A."/>
            <person name="Muraki A."/>
            <person name="Nakayama S."/>
            <person name="Nakazaki N."/>
            <person name="Naruo K."/>
            <person name="Okumura S."/>
            <person name="Shinpo S."/>
            <person name="Takeuchi C."/>
            <person name="Wada T."/>
            <person name="Watanabe A."/>
            <person name="Yamada M."/>
            <person name="Yasuda M."/>
            <person name="Sato S."/>
            <person name="de la Bastide M."/>
            <person name="Huang E."/>
            <person name="Spiegel L."/>
            <person name="Gnoj L."/>
            <person name="O'Shaughnessy A."/>
            <person name="Preston R."/>
            <person name="Habermann K."/>
            <person name="Murray J."/>
            <person name="Johnson D."/>
            <person name="Rohlfing T."/>
            <person name="Nelson J."/>
            <person name="Stoneking T."/>
            <person name="Pepin K."/>
            <person name="Spieth J."/>
            <person name="Sekhon M."/>
            <person name="Armstrong J."/>
            <person name="Becker M."/>
            <person name="Belter E."/>
            <person name="Cordum H."/>
            <person name="Cordes M."/>
            <person name="Courtney L."/>
            <person name="Courtney W."/>
            <person name="Dante M."/>
            <person name="Du H."/>
            <person name="Edwards J."/>
            <person name="Fryman J."/>
            <person name="Haakensen B."/>
            <person name="Lamar E."/>
            <person name="Latreille P."/>
            <person name="Leonard S."/>
            <person name="Meyer R."/>
            <person name="Mulvaney E."/>
            <person name="Ozersky P."/>
            <person name="Riley A."/>
            <person name="Strowmatt C."/>
            <person name="Wagner-McPherson C."/>
            <person name="Wollam A."/>
            <person name="Yoakum M."/>
            <person name="Bell M."/>
            <person name="Dedhia N."/>
            <person name="Parnell L."/>
            <person name="Shah R."/>
            <person name="Rodriguez M."/>
            <person name="Hoon See L."/>
            <person name="Vil D."/>
            <person name="Baker J."/>
            <person name="Kirchoff K."/>
            <person name="Toth K."/>
            <person name="King L."/>
            <person name="Bahret A."/>
            <person name="Miller B."/>
            <person name="Marra M.A."/>
            <person name="Martienssen R."/>
            <person name="McCombie W.R."/>
            <person name="Wilson R.K."/>
            <person name="Murphy G."/>
            <person name="Bancroft I."/>
            <person name="Volckaert G."/>
            <person name="Wambutt R."/>
            <person name="Duesterhoeft A."/>
            <person name="Stiekema W."/>
            <person name="Pohl T."/>
            <person name="Entian K.-D."/>
            <person name="Terryn N."/>
            <person name="Hartley N."/>
            <person name="Bent E."/>
            <person name="Johnson S."/>
            <person name="Langham S.-A."/>
            <person name="McCullagh B."/>
            <person name="Robben J."/>
            <person name="Grymonprez B."/>
            <person name="Zimmermann W."/>
            <person name="Ramsperger U."/>
            <person name="Wedler H."/>
            <person name="Balke K."/>
            <person name="Wedler E."/>
            <person name="Peters S."/>
            <person name="van Staveren M."/>
            <person name="Dirkse W."/>
            <person name="Mooijman P."/>
            <person name="Klein Lankhorst R."/>
            <person name="Weitzenegger T."/>
            <person name="Bothe G."/>
            <person name="Rose M."/>
            <person name="Hauf J."/>
            <person name="Berneiser S."/>
            <person name="Hempel S."/>
            <person name="Feldpausch M."/>
            <person name="Lamberth S."/>
            <person name="Villarroel R."/>
            <person name="Gielen J."/>
            <person name="Ardiles W."/>
            <person name="Bents O."/>
            <person name="Lemcke K."/>
            <person name="Kolesov G."/>
            <person name="Mayer K.F.X."/>
            <person name="Rudd S."/>
            <person name="Schoof H."/>
            <person name="Schueller C."/>
            <person name="Zaccaria P."/>
            <person name="Mewes H.-W."/>
            <person name="Bevan M."/>
            <person name="Fransz P.F."/>
        </authorList>
    </citation>
    <scope>NUCLEOTIDE SEQUENCE [LARGE SCALE GENOMIC DNA]</scope>
    <source>
        <strain>cv. Columbia</strain>
    </source>
</reference>
<reference key="2">
    <citation type="journal article" date="2017" name="Plant J.">
        <title>Araport11: a complete reannotation of the Arabidopsis thaliana reference genome.</title>
        <authorList>
            <person name="Cheng C.Y."/>
            <person name="Krishnakumar V."/>
            <person name="Chan A.P."/>
            <person name="Thibaud-Nissen F."/>
            <person name="Schobel S."/>
            <person name="Town C.D."/>
        </authorList>
    </citation>
    <scope>GENOME REANNOTATION</scope>
    <source>
        <strain>cv. Columbia</strain>
    </source>
</reference>
<reference key="3">
    <citation type="submission" date="1998-08" db="EMBL/GenBank/DDBJ databases">
        <title>Signal peptide selection derived cDNAs from Arabidopsis thaliana leaves and guard cells.</title>
        <authorList>
            <person name="Stracke R."/>
            <person name="Palme K."/>
        </authorList>
    </citation>
    <scope>NUCLEOTIDE SEQUENCE [LARGE SCALE MRNA]</scope>
</reference>
<reference key="4">
    <citation type="journal article" date="2003" name="Science">
        <title>Empirical analysis of transcriptional activity in the Arabidopsis genome.</title>
        <authorList>
            <person name="Yamada K."/>
            <person name="Lim J."/>
            <person name="Dale J.M."/>
            <person name="Chen H."/>
            <person name="Shinn P."/>
            <person name="Palm C.J."/>
            <person name="Southwick A.M."/>
            <person name="Wu H.C."/>
            <person name="Kim C.J."/>
            <person name="Nguyen M."/>
            <person name="Pham P.K."/>
            <person name="Cheuk R.F."/>
            <person name="Karlin-Newmann G."/>
            <person name="Liu S.X."/>
            <person name="Lam B."/>
            <person name="Sakano H."/>
            <person name="Wu T."/>
            <person name="Yu G."/>
            <person name="Miranda M."/>
            <person name="Quach H.L."/>
            <person name="Tripp M."/>
            <person name="Chang C.H."/>
            <person name="Lee J.M."/>
            <person name="Toriumi M.J."/>
            <person name="Chan M.M."/>
            <person name="Tang C.C."/>
            <person name="Onodera C.S."/>
            <person name="Deng J.M."/>
            <person name="Akiyama K."/>
            <person name="Ansari Y."/>
            <person name="Arakawa T."/>
            <person name="Banh J."/>
            <person name="Banno F."/>
            <person name="Bowser L."/>
            <person name="Brooks S.Y."/>
            <person name="Carninci P."/>
            <person name="Chao Q."/>
            <person name="Choy N."/>
            <person name="Enju A."/>
            <person name="Goldsmith A.D."/>
            <person name="Gurjal M."/>
            <person name="Hansen N.F."/>
            <person name="Hayashizaki Y."/>
            <person name="Johnson-Hopson C."/>
            <person name="Hsuan V.W."/>
            <person name="Iida K."/>
            <person name="Karnes M."/>
            <person name="Khan S."/>
            <person name="Koesema E."/>
            <person name="Ishida J."/>
            <person name="Jiang P.X."/>
            <person name="Jones T."/>
            <person name="Kawai J."/>
            <person name="Kamiya A."/>
            <person name="Meyers C."/>
            <person name="Nakajima M."/>
            <person name="Narusaka M."/>
            <person name="Seki M."/>
            <person name="Sakurai T."/>
            <person name="Satou M."/>
            <person name="Tamse R."/>
            <person name="Vaysberg M."/>
            <person name="Wallender E.K."/>
            <person name="Wong C."/>
            <person name="Yamamura Y."/>
            <person name="Yuan S."/>
            <person name="Shinozaki K."/>
            <person name="Davis R.W."/>
            <person name="Theologis A."/>
            <person name="Ecker J.R."/>
        </authorList>
    </citation>
    <scope>NUCLEOTIDE SEQUENCE [LARGE SCALE MRNA]</scope>
    <source>
        <strain>cv. Columbia</strain>
    </source>
</reference>
<reference key="5">
    <citation type="submission" date="2006-07" db="EMBL/GenBank/DDBJ databases">
        <title>Large-scale analysis of RIKEN Arabidopsis full-length (RAFL) cDNAs.</title>
        <authorList>
            <person name="Totoki Y."/>
            <person name="Seki M."/>
            <person name="Ishida J."/>
            <person name="Nakajima M."/>
            <person name="Enju A."/>
            <person name="Kamiya A."/>
            <person name="Narusaka M."/>
            <person name="Shin-i T."/>
            <person name="Nakagawa M."/>
            <person name="Sakamoto N."/>
            <person name="Oishi K."/>
            <person name="Kohara Y."/>
            <person name="Kobayashi M."/>
            <person name="Toyoda A."/>
            <person name="Sakaki Y."/>
            <person name="Sakurai T."/>
            <person name="Iida K."/>
            <person name="Akiyama K."/>
            <person name="Satou M."/>
            <person name="Toyoda T."/>
            <person name="Konagaya A."/>
            <person name="Carninci P."/>
            <person name="Kawai J."/>
            <person name="Hayashizaki Y."/>
            <person name="Shinozaki K."/>
        </authorList>
    </citation>
    <scope>NUCLEOTIDE SEQUENCE [LARGE SCALE MRNA]</scope>
    <source>
        <strain>cv. Columbia</strain>
    </source>
</reference>
<reference key="6">
    <citation type="journal article" date="2005" name="Curr. Protein Pept. Sci.">
        <title>Aspartic proteinase content of the Arabidopsis genome.</title>
        <authorList>
            <person name="Faro C."/>
            <person name="Gal S."/>
        </authorList>
    </citation>
    <scope>GENE FAMILY</scope>
</reference>
<reference key="7">
    <citation type="journal article" date="2014" name="Plant Physiol.">
        <title>Contrasting roles of the apoplastic aspartyl protease APOPLASTIC, ENHANCED DISEASE SUSCEPTIBILITY1-DEPENDENT1 and LEGUME LECTIN-LIKE PROTEIN1 in Arabidopsis systemic acquired resistance.</title>
        <authorList>
            <person name="Breitenbach H.H."/>
            <person name="Wenig M."/>
            <person name="Wittek F."/>
            <person name="Jorda L."/>
            <person name="Maldonado-Alconada A.M."/>
            <person name="Sarioglu H."/>
            <person name="Colby T."/>
            <person name="Knappe C."/>
            <person name="Bichlmeier M."/>
            <person name="Pabst E."/>
            <person name="Mackey D."/>
            <person name="Parker J.E."/>
            <person name="Vlot A.C."/>
        </authorList>
    </citation>
    <scope>FUNCTION</scope>
    <scope>INDUCTION</scope>
    <scope>SUBCELLULAR LOCATION</scope>
</reference>
<sequence>MSIMRNFLSMIIMLCVCLNWCFAEGAEKSDSGKVLDSYTIQVSSLFPSSSSCVPSSKASNTKSSLRVVHMHGACSHLSSDARVDHDEIIRRDQARVESIYSKLSKNSANEVSEAKSTELPAKSGITLGSGNYIVTIGIGTPKHDLSLVFDTGSDLTWTQCEPCLGSCYSQKEPKFNPSSSSTYQNVSCSSPMCEDAESCSASNCVYSIVYGDKSFTQGFLAKEKFTLTNSDVLEDVYFGCGENNQGLFDGVAGLLGLGPGKLSLPAQTTTTYNNIFSYCLPSFTSNSTGHLTFGSAGISESVKFTPISSFPSAFNYGIDIIGISVGDKELAITPNSFSTEGAIIDSGTVFTRLPTKVYAELRSVFKEKMSSYKSTSGYGLFDTCYDFTGLDTVTYPTIAFSFAGSTVVELDGSGISLPIKISQVCLAFAGNDDLPAIFGNVQQTTLDVVYDVAGGRVGFAPNGC</sequence>
<accession>Q9LEW3</accession>
<accession>Q8H7H9</accession>
<protein>
    <recommendedName>
        <fullName evidence="4">Aspartyl protease AED1</fullName>
        <ecNumber evidence="5">3.4.23.-</ecNumber>
    </recommendedName>
    <alternativeName>
        <fullName evidence="4">Apoplastic EDS1-dependent protein 1</fullName>
    </alternativeName>
</protein>
<gene>
    <name evidence="4" type="primary">AED1</name>
    <name evidence="6" type="ordered locus">At5g10760</name>
    <name evidence="7" type="ORF">T30N20.30</name>
</gene>
<dbReference type="EC" id="3.4.23.-" evidence="5"/>
<dbReference type="EMBL" id="AL365234">
    <property type="protein sequence ID" value="CAB96831.1"/>
    <property type="molecule type" value="Genomic_DNA"/>
</dbReference>
<dbReference type="EMBL" id="CP002688">
    <property type="protein sequence ID" value="AED91593.1"/>
    <property type="molecule type" value="Genomic_DNA"/>
</dbReference>
<dbReference type="EMBL" id="AF083666">
    <property type="protein sequence ID" value="AAN60226.1"/>
    <property type="molecule type" value="mRNA"/>
</dbReference>
<dbReference type="EMBL" id="AY072168">
    <property type="protein sequence ID" value="AAL59990.1"/>
    <property type="molecule type" value="mRNA"/>
</dbReference>
<dbReference type="EMBL" id="AY133788">
    <property type="protein sequence ID" value="AAM91722.1"/>
    <property type="molecule type" value="mRNA"/>
</dbReference>
<dbReference type="EMBL" id="AK226446">
    <property type="protein sequence ID" value="BAE98588.1"/>
    <property type="molecule type" value="mRNA"/>
</dbReference>
<dbReference type="PIR" id="T50785">
    <property type="entry name" value="T50785"/>
</dbReference>
<dbReference type="RefSeq" id="NP_196637.1">
    <property type="nucleotide sequence ID" value="NM_121114.4"/>
</dbReference>
<dbReference type="SMR" id="Q9LEW3"/>
<dbReference type="FunCoup" id="Q9LEW3">
    <property type="interactions" value="49"/>
</dbReference>
<dbReference type="STRING" id="3702.Q9LEW3"/>
<dbReference type="MEROPS" id="A01.A14"/>
<dbReference type="PaxDb" id="3702-AT5G10760.1"/>
<dbReference type="ProteomicsDB" id="244696"/>
<dbReference type="EnsemblPlants" id="AT5G10760.1">
    <property type="protein sequence ID" value="AT5G10760.1"/>
    <property type="gene ID" value="AT5G10760"/>
</dbReference>
<dbReference type="GeneID" id="830943"/>
<dbReference type="Gramene" id="AT5G10760.1">
    <property type="protein sequence ID" value="AT5G10760.1"/>
    <property type="gene ID" value="AT5G10760"/>
</dbReference>
<dbReference type="KEGG" id="ath:AT5G10760"/>
<dbReference type="Araport" id="AT5G10760"/>
<dbReference type="TAIR" id="AT5G10760">
    <property type="gene designation" value="AED1"/>
</dbReference>
<dbReference type="eggNOG" id="KOG1339">
    <property type="taxonomic scope" value="Eukaryota"/>
</dbReference>
<dbReference type="HOGENOM" id="CLU_005738_5_2_1"/>
<dbReference type="InParanoid" id="Q9LEW3"/>
<dbReference type="OMA" id="CEDAESC"/>
<dbReference type="PhylomeDB" id="Q9LEW3"/>
<dbReference type="PRO" id="PR:Q9LEW3"/>
<dbReference type="Proteomes" id="UP000006548">
    <property type="component" value="Chromosome 5"/>
</dbReference>
<dbReference type="ExpressionAtlas" id="Q9LEW3">
    <property type="expression patterns" value="baseline and differential"/>
</dbReference>
<dbReference type="GO" id="GO:0048046">
    <property type="term" value="C:apoplast"/>
    <property type="evidence" value="ECO:0007005"/>
    <property type="project" value="TAIR"/>
</dbReference>
<dbReference type="GO" id="GO:0004190">
    <property type="term" value="F:aspartic-type endopeptidase activity"/>
    <property type="evidence" value="ECO:0007669"/>
    <property type="project" value="UniProtKB-KW"/>
</dbReference>
<dbReference type="GO" id="GO:0006508">
    <property type="term" value="P:proteolysis"/>
    <property type="evidence" value="ECO:0007669"/>
    <property type="project" value="UniProtKB-KW"/>
</dbReference>
<dbReference type="GO" id="GO:0009627">
    <property type="term" value="P:systemic acquired resistance"/>
    <property type="evidence" value="ECO:0000315"/>
    <property type="project" value="TAIR"/>
</dbReference>
<dbReference type="FunFam" id="2.40.70.10:FF:000013">
    <property type="entry name" value="Aspartyl protease AED1"/>
    <property type="match status" value="1"/>
</dbReference>
<dbReference type="FunFam" id="2.40.70.10:FF:000021">
    <property type="entry name" value="Aspartyl protease AED1"/>
    <property type="match status" value="1"/>
</dbReference>
<dbReference type="Gene3D" id="2.40.70.10">
    <property type="entry name" value="Acid Proteases"/>
    <property type="match status" value="2"/>
</dbReference>
<dbReference type="InterPro" id="IPR001461">
    <property type="entry name" value="Aspartic_peptidase_A1"/>
</dbReference>
<dbReference type="InterPro" id="IPR033121">
    <property type="entry name" value="PEPTIDASE_A1"/>
</dbReference>
<dbReference type="InterPro" id="IPR021109">
    <property type="entry name" value="Peptidase_aspartic_dom_sf"/>
</dbReference>
<dbReference type="InterPro" id="IPR032799">
    <property type="entry name" value="TAXi_C"/>
</dbReference>
<dbReference type="InterPro" id="IPR032861">
    <property type="entry name" value="TAXi_N"/>
</dbReference>
<dbReference type="PANTHER" id="PTHR13683:SF750">
    <property type="entry name" value="ASPARTYL PROTEASE AED1"/>
    <property type="match status" value="1"/>
</dbReference>
<dbReference type="PANTHER" id="PTHR13683">
    <property type="entry name" value="ASPARTYL PROTEASES"/>
    <property type="match status" value="1"/>
</dbReference>
<dbReference type="Pfam" id="PF14541">
    <property type="entry name" value="TAXi_C"/>
    <property type="match status" value="1"/>
</dbReference>
<dbReference type="Pfam" id="PF14543">
    <property type="entry name" value="TAXi_N"/>
    <property type="match status" value="1"/>
</dbReference>
<dbReference type="SUPFAM" id="SSF50630">
    <property type="entry name" value="Acid proteases"/>
    <property type="match status" value="1"/>
</dbReference>
<dbReference type="PROSITE" id="PS00141">
    <property type="entry name" value="ASP_PROTEASE"/>
    <property type="match status" value="1"/>
</dbReference>
<dbReference type="PROSITE" id="PS51767">
    <property type="entry name" value="PEPTIDASE_A1"/>
    <property type="match status" value="1"/>
</dbReference>
<evidence type="ECO:0000255" key="1"/>
<evidence type="ECO:0000255" key="2">
    <source>
        <dbReference type="PROSITE-ProRule" id="PRU01103"/>
    </source>
</evidence>
<evidence type="ECO:0000269" key="3">
    <source>
    </source>
</evidence>
<evidence type="ECO:0000303" key="4">
    <source>
    </source>
</evidence>
<evidence type="ECO:0000305" key="5"/>
<evidence type="ECO:0000312" key="6">
    <source>
        <dbReference type="Araport" id="AT5G10760"/>
    </source>
</evidence>
<evidence type="ECO:0000312" key="7">
    <source>
        <dbReference type="EMBL" id="CAB96831.1"/>
    </source>
</evidence>
<keyword id="KW-0052">Apoplast</keyword>
<keyword id="KW-0064">Aspartyl protease</keyword>
<keyword id="KW-1015">Disulfide bond</keyword>
<keyword id="KW-0378">Hydrolase</keyword>
<keyword id="KW-0645">Protease</keyword>
<keyword id="KW-1185">Reference proteome</keyword>
<keyword id="KW-0964">Secreted</keyword>
<keyword id="KW-0732">Signal</keyword>
<organism>
    <name type="scientific">Arabidopsis thaliana</name>
    <name type="common">Mouse-ear cress</name>
    <dbReference type="NCBI Taxonomy" id="3702"/>
    <lineage>
        <taxon>Eukaryota</taxon>
        <taxon>Viridiplantae</taxon>
        <taxon>Streptophyta</taxon>
        <taxon>Embryophyta</taxon>
        <taxon>Tracheophyta</taxon>
        <taxon>Spermatophyta</taxon>
        <taxon>Magnoliopsida</taxon>
        <taxon>eudicotyledons</taxon>
        <taxon>Gunneridae</taxon>
        <taxon>Pentapetalae</taxon>
        <taxon>rosids</taxon>
        <taxon>malvids</taxon>
        <taxon>Brassicales</taxon>
        <taxon>Brassicaceae</taxon>
        <taxon>Camelineae</taxon>
        <taxon>Arabidopsis</taxon>
    </lineage>
</organism>
<feature type="signal peptide" evidence="1">
    <location>
        <begin position="1"/>
        <end position="25"/>
    </location>
</feature>
<feature type="chain" id="PRO_5005942997" description="Aspartyl protease AED1" evidence="1">
    <location>
        <begin position="26"/>
        <end position="464"/>
    </location>
</feature>
<feature type="domain" description="Peptidase A1" evidence="2">
    <location>
        <begin position="132"/>
        <end position="460"/>
    </location>
</feature>
<feature type="active site" evidence="2">
    <location>
        <position position="150"/>
    </location>
</feature>
<feature type="active site" evidence="2">
    <location>
        <position position="345"/>
    </location>
</feature>
<feature type="disulfide bond" evidence="2">
    <location>
        <begin position="384"/>
        <end position="425"/>
    </location>
</feature>
<feature type="sequence conflict" description="In Ref. 3; AAN60226." evidence="5" ref="3">
    <original>V</original>
    <variation>G</variation>
    <location>
        <position position="209"/>
    </location>
</feature>
<feature type="sequence conflict" description="In Ref. 3; AAN60226." evidence="5" ref="3">
    <original>S</original>
    <variation>G</variation>
    <location>
        <position position="405"/>
    </location>
</feature>
<name>AED1_ARATH</name>
<comment type="function">
    <text evidence="3">Aspartyl protease involved in a homeostatic feedback mechanism regulating systemic immunity. Has only mild or no influence on local defenses. Acts downstream of salicylic acid to suppress systemic immunity.</text>
</comment>
<comment type="subcellular location">
    <subcellularLocation>
        <location evidence="3">Secreted</location>
        <location evidence="3">Extracellular space</location>
        <location evidence="3">Apoplast</location>
    </subcellularLocation>
</comment>
<comment type="induction">
    <text evidence="3">Up-regulated locally and systematically during systemic acquired resistance (SAR) and locally by salicylic acid. The local induction is independent of EDS1 while the systemic induction is EDS1-dependent.</text>
</comment>
<comment type="similarity">
    <text evidence="5">Belongs to the peptidase A1 family.</text>
</comment>